<organism>
    <name type="scientific">Listeria welshimeri serovar 6b (strain ATCC 35897 / DSM 20650 / CCUG 15529 / CIP 8149 / NCTC 11857 / SLCC 5334 / V8)</name>
    <dbReference type="NCBI Taxonomy" id="386043"/>
    <lineage>
        <taxon>Bacteria</taxon>
        <taxon>Bacillati</taxon>
        <taxon>Bacillota</taxon>
        <taxon>Bacilli</taxon>
        <taxon>Bacillales</taxon>
        <taxon>Listeriaceae</taxon>
        <taxon>Listeria</taxon>
    </lineage>
</organism>
<name>LGT_LISW6</name>
<feature type="chain" id="PRO_1000053450" description="Phosphatidylglycerol--prolipoprotein diacylglyceryl transferase">
    <location>
        <begin position="1"/>
        <end position="277"/>
    </location>
</feature>
<feature type="transmembrane region" description="Helical" evidence="1">
    <location>
        <begin position="22"/>
        <end position="42"/>
    </location>
</feature>
<feature type="transmembrane region" description="Helical" evidence="1">
    <location>
        <begin position="51"/>
        <end position="71"/>
    </location>
</feature>
<feature type="transmembrane region" description="Helical" evidence="1">
    <location>
        <begin position="89"/>
        <end position="109"/>
    </location>
</feature>
<feature type="transmembrane region" description="Helical" evidence="1">
    <location>
        <begin position="116"/>
        <end position="136"/>
    </location>
</feature>
<feature type="transmembrane region" description="Helical" evidence="1">
    <location>
        <begin position="177"/>
        <end position="197"/>
    </location>
</feature>
<feature type="transmembrane region" description="Helical" evidence="1">
    <location>
        <begin position="205"/>
        <end position="225"/>
    </location>
</feature>
<feature type="transmembrane region" description="Helical" evidence="1">
    <location>
        <begin position="235"/>
        <end position="255"/>
    </location>
</feature>
<feature type="binding site" evidence="1">
    <location>
        <position position="137"/>
    </location>
    <ligand>
        <name>a 1,2-diacyl-sn-glycero-3-phospho-(1'-sn-glycerol)</name>
        <dbReference type="ChEBI" id="CHEBI:64716"/>
    </ligand>
</feature>
<sequence length="277" mass="31655">MGNGVQPLDPVAIQMGSLSVKWYGVIIASAVVIALLLALSEANKRKMDKEIIVDLLIWAIPISIISARIYYVIFEWDFYKNNLGEIIKIWHGGIAIYGALIGAVLTAIIFSRVKKISFWQLADVVAPSLIIAQAIGRWGNFMNQEAHGAETTRAFLEGLHLPEFIINQMFIDGIYYQPTFLYESLWNVLGFILLLIIRRTKIRSGELFLSYVIWYSFGRFFIEGMRTDSLMWGDFRVSQVLSLLLIVLSIGLIIYRRLKMNPPYYMEDKFGKVAKKK</sequence>
<dbReference type="EC" id="2.5.1.145" evidence="1"/>
<dbReference type="EMBL" id="AM263198">
    <property type="protein sequence ID" value="CAK21848.1"/>
    <property type="molecule type" value="Genomic_DNA"/>
</dbReference>
<dbReference type="RefSeq" id="WP_011703166.1">
    <property type="nucleotide sequence ID" value="NC_008555.1"/>
</dbReference>
<dbReference type="SMR" id="A0ALG6"/>
<dbReference type="STRING" id="386043.lwe2430"/>
<dbReference type="GeneID" id="61190349"/>
<dbReference type="KEGG" id="lwe:lwe2430"/>
<dbReference type="eggNOG" id="COG0682">
    <property type="taxonomic scope" value="Bacteria"/>
</dbReference>
<dbReference type="HOGENOM" id="CLU_013386_1_2_9"/>
<dbReference type="OrthoDB" id="871140at2"/>
<dbReference type="UniPathway" id="UPA00664"/>
<dbReference type="Proteomes" id="UP000000779">
    <property type="component" value="Chromosome"/>
</dbReference>
<dbReference type="GO" id="GO:0005886">
    <property type="term" value="C:plasma membrane"/>
    <property type="evidence" value="ECO:0007669"/>
    <property type="project" value="UniProtKB-SubCell"/>
</dbReference>
<dbReference type="GO" id="GO:0008961">
    <property type="term" value="F:phosphatidylglycerol-prolipoprotein diacylglyceryl transferase activity"/>
    <property type="evidence" value="ECO:0007669"/>
    <property type="project" value="UniProtKB-UniRule"/>
</dbReference>
<dbReference type="GO" id="GO:0042158">
    <property type="term" value="P:lipoprotein biosynthetic process"/>
    <property type="evidence" value="ECO:0007669"/>
    <property type="project" value="UniProtKB-UniRule"/>
</dbReference>
<dbReference type="HAMAP" id="MF_01147">
    <property type="entry name" value="Lgt"/>
    <property type="match status" value="1"/>
</dbReference>
<dbReference type="InterPro" id="IPR001640">
    <property type="entry name" value="Lgt"/>
</dbReference>
<dbReference type="NCBIfam" id="TIGR00544">
    <property type="entry name" value="lgt"/>
    <property type="match status" value="1"/>
</dbReference>
<dbReference type="PANTHER" id="PTHR30589:SF0">
    <property type="entry name" value="PHOSPHATIDYLGLYCEROL--PROLIPOPROTEIN DIACYLGLYCERYL TRANSFERASE"/>
    <property type="match status" value="1"/>
</dbReference>
<dbReference type="PANTHER" id="PTHR30589">
    <property type="entry name" value="PROLIPOPROTEIN DIACYLGLYCERYL TRANSFERASE"/>
    <property type="match status" value="1"/>
</dbReference>
<dbReference type="Pfam" id="PF01790">
    <property type="entry name" value="LGT"/>
    <property type="match status" value="1"/>
</dbReference>
<dbReference type="PROSITE" id="PS01311">
    <property type="entry name" value="LGT"/>
    <property type="match status" value="1"/>
</dbReference>
<comment type="function">
    <text evidence="1">Catalyzes the transfer of the diacylglyceryl group from phosphatidylglycerol to the sulfhydryl group of the N-terminal cysteine of a prolipoprotein, the first step in the formation of mature lipoproteins.</text>
</comment>
<comment type="catalytic activity">
    <reaction evidence="1">
        <text>L-cysteinyl-[prolipoprotein] + a 1,2-diacyl-sn-glycero-3-phospho-(1'-sn-glycerol) = an S-1,2-diacyl-sn-glyceryl-L-cysteinyl-[prolipoprotein] + sn-glycerol 1-phosphate + H(+)</text>
        <dbReference type="Rhea" id="RHEA:56712"/>
        <dbReference type="Rhea" id="RHEA-COMP:14679"/>
        <dbReference type="Rhea" id="RHEA-COMP:14680"/>
        <dbReference type="ChEBI" id="CHEBI:15378"/>
        <dbReference type="ChEBI" id="CHEBI:29950"/>
        <dbReference type="ChEBI" id="CHEBI:57685"/>
        <dbReference type="ChEBI" id="CHEBI:64716"/>
        <dbReference type="ChEBI" id="CHEBI:140658"/>
        <dbReference type="EC" id="2.5.1.145"/>
    </reaction>
</comment>
<comment type="pathway">
    <text evidence="1">Protein modification; lipoprotein biosynthesis (diacylglyceryl transfer).</text>
</comment>
<comment type="subcellular location">
    <subcellularLocation>
        <location evidence="1">Cell membrane</location>
        <topology evidence="1">Multi-pass membrane protein</topology>
    </subcellularLocation>
</comment>
<comment type="similarity">
    <text evidence="1">Belongs to the Lgt family.</text>
</comment>
<gene>
    <name evidence="1" type="primary">lgt</name>
    <name type="ordered locus">lwe2430</name>
</gene>
<evidence type="ECO:0000255" key="1">
    <source>
        <dbReference type="HAMAP-Rule" id="MF_01147"/>
    </source>
</evidence>
<reference key="1">
    <citation type="journal article" date="2006" name="J. Bacteriol.">
        <title>Whole-genome sequence of Listeria welshimeri reveals common steps in genome reduction with Listeria innocua as compared to Listeria monocytogenes.</title>
        <authorList>
            <person name="Hain T."/>
            <person name="Steinweg C."/>
            <person name="Kuenne C.T."/>
            <person name="Billion A."/>
            <person name="Ghai R."/>
            <person name="Chatterjee S.S."/>
            <person name="Domann E."/>
            <person name="Kaerst U."/>
            <person name="Goesmann A."/>
            <person name="Bekel T."/>
            <person name="Bartels D."/>
            <person name="Kaiser O."/>
            <person name="Meyer F."/>
            <person name="Puehler A."/>
            <person name="Weisshaar B."/>
            <person name="Wehland J."/>
            <person name="Liang C."/>
            <person name="Dandekar T."/>
            <person name="Lampidis R."/>
            <person name="Kreft J."/>
            <person name="Goebel W."/>
            <person name="Chakraborty T."/>
        </authorList>
    </citation>
    <scope>NUCLEOTIDE SEQUENCE [LARGE SCALE GENOMIC DNA]</scope>
    <source>
        <strain>ATCC 35897 / DSM 20650 / CCUG 15529 / CIP 8149 / NCTC 11857 / SLCC 5334 / V8</strain>
    </source>
</reference>
<proteinExistence type="inferred from homology"/>
<keyword id="KW-1003">Cell membrane</keyword>
<keyword id="KW-0472">Membrane</keyword>
<keyword id="KW-0808">Transferase</keyword>
<keyword id="KW-0812">Transmembrane</keyword>
<keyword id="KW-1133">Transmembrane helix</keyword>
<accession>A0ALG6</accession>
<protein>
    <recommendedName>
        <fullName evidence="1">Phosphatidylglycerol--prolipoprotein diacylglyceryl transferase</fullName>
        <ecNumber evidence="1">2.5.1.145</ecNumber>
    </recommendedName>
</protein>